<organism>
    <name type="scientific">Vibrio cholerae serotype O1 (strain ATCC 39315 / El Tor Inaba N16961)</name>
    <dbReference type="NCBI Taxonomy" id="243277"/>
    <lineage>
        <taxon>Bacteria</taxon>
        <taxon>Pseudomonadati</taxon>
        <taxon>Pseudomonadota</taxon>
        <taxon>Gammaproteobacteria</taxon>
        <taxon>Vibrionales</taxon>
        <taxon>Vibrionaceae</taxon>
        <taxon>Vibrio</taxon>
    </lineage>
</organism>
<protein>
    <recommendedName>
        <fullName evidence="1">Large ribosomal subunit protein uL23</fullName>
    </recommendedName>
    <alternativeName>
        <fullName evidence="2">50S ribosomal protein L23</fullName>
    </alternativeName>
</protein>
<dbReference type="EMBL" id="AE003852">
    <property type="protein sequence ID" value="AAF95735.1"/>
    <property type="molecule type" value="Genomic_DNA"/>
</dbReference>
<dbReference type="PIR" id="D82059">
    <property type="entry name" value="D82059"/>
</dbReference>
<dbReference type="RefSeq" id="NP_232222.1">
    <property type="nucleotide sequence ID" value="NC_002505.1"/>
</dbReference>
<dbReference type="RefSeq" id="WP_000617542.1">
    <property type="nucleotide sequence ID" value="NZ_LT906614.1"/>
</dbReference>
<dbReference type="SMR" id="Q9KNY6"/>
<dbReference type="STRING" id="243277.VC_2594"/>
<dbReference type="DNASU" id="2615611"/>
<dbReference type="EnsemblBacteria" id="AAF95735">
    <property type="protein sequence ID" value="AAF95735"/>
    <property type="gene ID" value="VC_2594"/>
</dbReference>
<dbReference type="GeneID" id="88785153"/>
<dbReference type="KEGG" id="vch:VC_2594"/>
<dbReference type="PATRIC" id="fig|243277.26.peg.2473"/>
<dbReference type="eggNOG" id="COG0089">
    <property type="taxonomic scope" value="Bacteria"/>
</dbReference>
<dbReference type="HOGENOM" id="CLU_037562_3_1_6"/>
<dbReference type="Proteomes" id="UP000000584">
    <property type="component" value="Chromosome 1"/>
</dbReference>
<dbReference type="GO" id="GO:0022625">
    <property type="term" value="C:cytosolic large ribosomal subunit"/>
    <property type="evidence" value="ECO:0000318"/>
    <property type="project" value="GO_Central"/>
</dbReference>
<dbReference type="GO" id="GO:0019843">
    <property type="term" value="F:rRNA binding"/>
    <property type="evidence" value="ECO:0007669"/>
    <property type="project" value="UniProtKB-UniRule"/>
</dbReference>
<dbReference type="GO" id="GO:0003735">
    <property type="term" value="F:structural constituent of ribosome"/>
    <property type="evidence" value="ECO:0000318"/>
    <property type="project" value="GO_Central"/>
</dbReference>
<dbReference type="GO" id="GO:0006412">
    <property type="term" value="P:translation"/>
    <property type="evidence" value="ECO:0007669"/>
    <property type="project" value="UniProtKB-UniRule"/>
</dbReference>
<dbReference type="FunFam" id="3.30.70.330:FF:000001">
    <property type="entry name" value="50S ribosomal protein L23"/>
    <property type="match status" value="1"/>
</dbReference>
<dbReference type="Gene3D" id="3.30.70.330">
    <property type="match status" value="1"/>
</dbReference>
<dbReference type="HAMAP" id="MF_01369_B">
    <property type="entry name" value="Ribosomal_uL23_B"/>
    <property type="match status" value="1"/>
</dbReference>
<dbReference type="InterPro" id="IPR012677">
    <property type="entry name" value="Nucleotide-bd_a/b_plait_sf"/>
</dbReference>
<dbReference type="InterPro" id="IPR013025">
    <property type="entry name" value="Ribosomal_uL23-like"/>
</dbReference>
<dbReference type="InterPro" id="IPR012678">
    <property type="entry name" value="Ribosomal_uL23/eL15/eS24_sf"/>
</dbReference>
<dbReference type="InterPro" id="IPR001014">
    <property type="entry name" value="Ribosomal_uL23_CS"/>
</dbReference>
<dbReference type="NCBIfam" id="NF004358">
    <property type="entry name" value="PRK05738.1-1"/>
    <property type="match status" value="1"/>
</dbReference>
<dbReference type="NCBIfam" id="NF004359">
    <property type="entry name" value="PRK05738.1-3"/>
    <property type="match status" value="1"/>
</dbReference>
<dbReference type="NCBIfam" id="NF004360">
    <property type="entry name" value="PRK05738.1-5"/>
    <property type="match status" value="1"/>
</dbReference>
<dbReference type="NCBIfam" id="NF004363">
    <property type="entry name" value="PRK05738.2-4"/>
    <property type="match status" value="1"/>
</dbReference>
<dbReference type="PANTHER" id="PTHR11620">
    <property type="entry name" value="60S RIBOSOMAL PROTEIN L23A"/>
    <property type="match status" value="1"/>
</dbReference>
<dbReference type="Pfam" id="PF00276">
    <property type="entry name" value="Ribosomal_L23"/>
    <property type="match status" value="1"/>
</dbReference>
<dbReference type="SUPFAM" id="SSF54189">
    <property type="entry name" value="Ribosomal proteins S24e, L23 and L15e"/>
    <property type="match status" value="1"/>
</dbReference>
<dbReference type="PROSITE" id="PS00050">
    <property type="entry name" value="RIBOSOMAL_L23"/>
    <property type="match status" value="1"/>
</dbReference>
<gene>
    <name evidence="1" type="primary">rplW</name>
    <name type="ordered locus">VC_2594</name>
</gene>
<sequence>MIREERLLKVLRAPHISEKATMSAEKSNTIVFKVAKDATKKEIKAAVEKLFEVEVKSVNTLIIKGKTKRQGLRQGRRSDVKKAYVTLNEGQDLDFVGGAE</sequence>
<name>RL23_VIBCH</name>
<proteinExistence type="inferred from homology"/>
<keyword id="KW-1185">Reference proteome</keyword>
<keyword id="KW-0687">Ribonucleoprotein</keyword>
<keyword id="KW-0689">Ribosomal protein</keyword>
<keyword id="KW-0694">RNA-binding</keyword>
<keyword id="KW-0699">rRNA-binding</keyword>
<comment type="function">
    <text evidence="1">One of the early assembly proteins it binds 23S rRNA. One of the proteins that surrounds the polypeptide exit tunnel on the outside of the ribosome. Forms the main docking site for trigger factor binding to the ribosome.</text>
</comment>
<comment type="subunit">
    <text evidence="1">Part of the 50S ribosomal subunit. Contacts protein L29, and trigger factor when it is bound to the ribosome.</text>
</comment>
<comment type="similarity">
    <text evidence="1">Belongs to the universal ribosomal protein uL23 family.</text>
</comment>
<evidence type="ECO:0000255" key="1">
    <source>
        <dbReference type="HAMAP-Rule" id="MF_01369"/>
    </source>
</evidence>
<evidence type="ECO:0000305" key="2"/>
<reference key="1">
    <citation type="journal article" date="2000" name="Nature">
        <title>DNA sequence of both chromosomes of the cholera pathogen Vibrio cholerae.</title>
        <authorList>
            <person name="Heidelberg J.F."/>
            <person name="Eisen J.A."/>
            <person name="Nelson W.C."/>
            <person name="Clayton R.A."/>
            <person name="Gwinn M.L."/>
            <person name="Dodson R.J."/>
            <person name="Haft D.H."/>
            <person name="Hickey E.K."/>
            <person name="Peterson J.D."/>
            <person name="Umayam L.A."/>
            <person name="Gill S.R."/>
            <person name="Nelson K.E."/>
            <person name="Read T.D."/>
            <person name="Tettelin H."/>
            <person name="Richardson D.L."/>
            <person name="Ermolaeva M.D."/>
            <person name="Vamathevan J.J."/>
            <person name="Bass S."/>
            <person name="Qin H."/>
            <person name="Dragoi I."/>
            <person name="Sellers P."/>
            <person name="McDonald L.A."/>
            <person name="Utterback T.R."/>
            <person name="Fleischmann R.D."/>
            <person name="Nierman W.C."/>
            <person name="White O."/>
            <person name="Salzberg S.L."/>
            <person name="Smith H.O."/>
            <person name="Colwell R.R."/>
            <person name="Mekalanos J.J."/>
            <person name="Venter J.C."/>
            <person name="Fraser C.M."/>
        </authorList>
    </citation>
    <scope>NUCLEOTIDE SEQUENCE [LARGE SCALE GENOMIC DNA]</scope>
    <source>
        <strain>ATCC 39315 / El Tor Inaba N16961</strain>
    </source>
</reference>
<feature type="chain" id="PRO_0000272868" description="Large ribosomal subunit protein uL23">
    <location>
        <begin position="1"/>
        <end position="100"/>
    </location>
</feature>
<accession>Q9KNY6</accession>